<gene>
    <name evidence="1" type="primary">panB</name>
    <name type="ordered locus">jk0674</name>
</gene>
<proteinExistence type="inferred from homology"/>
<dbReference type="EC" id="2.1.2.11" evidence="1"/>
<dbReference type="EMBL" id="CR931997">
    <property type="protein sequence ID" value="CAI36836.1"/>
    <property type="status" value="ALT_INIT"/>
    <property type="molecule type" value="Genomic_DNA"/>
</dbReference>
<dbReference type="RefSeq" id="WP_011273297.1">
    <property type="nucleotide sequence ID" value="NC_007164.1"/>
</dbReference>
<dbReference type="SMR" id="Q4JWH1"/>
<dbReference type="STRING" id="306537.jk0674"/>
<dbReference type="KEGG" id="cjk:jk0674"/>
<dbReference type="eggNOG" id="COG0413">
    <property type="taxonomic scope" value="Bacteria"/>
</dbReference>
<dbReference type="HOGENOM" id="CLU_036645_1_0_11"/>
<dbReference type="OrthoDB" id="9781789at2"/>
<dbReference type="UniPathway" id="UPA00028">
    <property type="reaction ID" value="UER00003"/>
</dbReference>
<dbReference type="Proteomes" id="UP000000545">
    <property type="component" value="Chromosome"/>
</dbReference>
<dbReference type="GO" id="GO:0005737">
    <property type="term" value="C:cytoplasm"/>
    <property type="evidence" value="ECO:0007669"/>
    <property type="project" value="UniProtKB-SubCell"/>
</dbReference>
<dbReference type="GO" id="GO:0003864">
    <property type="term" value="F:3-methyl-2-oxobutanoate hydroxymethyltransferase activity"/>
    <property type="evidence" value="ECO:0007669"/>
    <property type="project" value="UniProtKB-UniRule"/>
</dbReference>
<dbReference type="GO" id="GO:0000287">
    <property type="term" value="F:magnesium ion binding"/>
    <property type="evidence" value="ECO:0007669"/>
    <property type="project" value="TreeGrafter"/>
</dbReference>
<dbReference type="GO" id="GO:0015940">
    <property type="term" value="P:pantothenate biosynthetic process"/>
    <property type="evidence" value="ECO:0007669"/>
    <property type="project" value="UniProtKB-UniRule"/>
</dbReference>
<dbReference type="CDD" id="cd06557">
    <property type="entry name" value="KPHMT-like"/>
    <property type="match status" value="1"/>
</dbReference>
<dbReference type="FunFam" id="3.20.20.60:FF:000003">
    <property type="entry name" value="3-methyl-2-oxobutanoate hydroxymethyltransferase"/>
    <property type="match status" value="1"/>
</dbReference>
<dbReference type="Gene3D" id="3.20.20.60">
    <property type="entry name" value="Phosphoenolpyruvate-binding domains"/>
    <property type="match status" value="1"/>
</dbReference>
<dbReference type="HAMAP" id="MF_00156">
    <property type="entry name" value="PanB"/>
    <property type="match status" value="1"/>
</dbReference>
<dbReference type="InterPro" id="IPR003700">
    <property type="entry name" value="Pantoate_hydroxy_MeTrfase"/>
</dbReference>
<dbReference type="InterPro" id="IPR015813">
    <property type="entry name" value="Pyrv/PenolPyrv_kinase-like_dom"/>
</dbReference>
<dbReference type="InterPro" id="IPR040442">
    <property type="entry name" value="Pyrv_kinase-like_dom_sf"/>
</dbReference>
<dbReference type="NCBIfam" id="TIGR00222">
    <property type="entry name" value="panB"/>
    <property type="match status" value="1"/>
</dbReference>
<dbReference type="NCBIfam" id="NF001452">
    <property type="entry name" value="PRK00311.1"/>
    <property type="match status" value="1"/>
</dbReference>
<dbReference type="PANTHER" id="PTHR20881">
    <property type="entry name" value="3-METHYL-2-OXOBUTANOATE HYDROXYMETHYLTRANSFERASE"/>
    <property type="match status" value="1"/>
</dbReference>
<dbReference type="PANTHER" id="PTHR20881:SF0">
    <property type="entry name" value="3-METHYL-2-OXOBUTANOATE HYDROXYMETHYLTRANSFERASE"/>
    <property type="match status" value="1"/>
</dbReference>
<dbReference type="Pfam" id="PF02548">
    <property type="entry name" value="Pantoate_transf"/>
    <property type="match status" value="1"/>
</dbReference>
<dbReference type="PIRSF" id="PIRSF000388">
    <property type="entry name" value="Pantoate_hydroxy_MeTrfase"/>
    <property type="match status" value="1"/>
</dbReference>
<dbReference type="SUPFAM" id="SSF51621">
    <property type="entry name" value="Phosphoenolpyruvate/pyruvate domain"/>
    <property type="match status" value="1"/>
</dbReference>
<evidence type="ECO:0000255" key="1">
    <source>
        <dbReference type="HAMAP-Rule" id="MF_00156"/>
    </source>
</evidence>
<evidence type="ECO:0000305" key="2"/>
<accession>Q4JWH1</accession>
<reference key="1">
    <citation type="journal article" date="2005" name="J. Bacteriol.">
        <title>Complete genome sequence and analysis of the multiresistant nosocomial pathogen Corynebacterium jeikeium K411, a lipid-requiring bacterium of the human skin flora.</title>
        <authorList>
            <person name="Tauch A."/>
            <person name="Kaiser O."/>
            <person name="Hain T."/>
            <person name="Goesmann A."/>
            <person name="Weisshaar B."/>
            <person name="Albersmeier A."/>
            <person name="Bekel T."/>
            <person name="Bischoff N."/>
            <person name="Brune I."/>
            <person name="Chakraborty T."/>
            <person name="Kalinowski J."/>
            <person name="Meyer F."/>
            <person name="Rupp O."/>
            <person name="Schneiker S."/>
            <person name="Viehoever P."/>
            <person name="Puehler A."/>
        </authorList>
    </citation>
    <scope>NUCLEOTIDE SEQUENCE [LARGE SCALE GENOMIC DNA]</scope>
    <source>
        <strain>K411</strain>
    </source>
</reference>
<organism>
    <name type="scientific">Corynebacterium jeikeium (strain K411)</name>
    <dbReference type="NCBI Taxonomy" id="306537"/>
    <lineage>
        <taxon>Bacteria</taxon>
        <taxon>Bacillati</taxon>
        <taxon>Actinomycetota</taxon>
        <taxon>Actinomycetes</taxon>
        <taxon>Mycobacteriales</taxon>
        <taxon>Corynebacteriaceae</taxon>
        <taxon>Corynebacterium</taxon>
    </lineage>
</organism>
<feature type="chain" id="PRO_0000297252" description="3-methyl-2-oxobutanoate hydroxymethyltransferase">
    <location>
        <begin position="1"/>
        <end position="283"/>
    </location>
</feature>
<feature type="active site" description="Proton acceptor" evidence="1">
    <location>
        <position position="200"/>
    </location>
</feature>
<feature type="binding site" evidence="1">
    <location>
        <begin position="63"/>
        <end position="64"/>
    </location>
    <ligand>
        <name>3-methyl-2-oxobutanoate</name>
        <dbReference type="ChEBI" id="CHEBI:11851"/>
    </ligand>
</feature>
<feature type="binding site" evidence="1">
    <location>
        <position position="63"/>
    </location>
    <ligand>
        <name>Mg(2+)</name>
        <dbReference type="ChEBI" id="CHEBI:18420"/>
    </ligand>
</feature>
<feature type="binding site" evidence="1">
    <location>
        <position position="102"/>
    </location>
    <ligand>
        <name>3-methyl-2-oxobutanoate</name>
        <dbReference type="ChEBI" id="CHEBI:11851"/>
    </ligand>
</feature>
<feature type="binding site" evidence="1">
    <location>
        <position position="102"/>
    </location>
    <ligand>
        <name>Mg(2+)</name>
        <dbReference type="ChEBI" id="CHEBI:18420"/>
    </ligand>
</feature>
<feature type="binding site" evidence="1">
    <location>
        <position position="132"/>
    </location>
    <ligand>
        <name>3-methyl-2-oxobutanoate</name>
        <dbReference type="ChEBI" id="CHEBI:11851"/>
    </ligand>
</feature>
<feature type="binding site" evidence="1">
    <location>
        <position position="134"/>
    </location>
    <ligand>
        <name>Mg(2+)</name>
        <dbReference type="ChEBI" id="CHEBI:18420"/>
    </ligand>
</feature>
<keyword id="KW-0963">Cytoplasm</keyword>
<keyword id="KW-0460">Magnesium</keyword>
<keyword id="KW-0479">Metal-binding</keyword>
<keyword id="KW-0566">Pantothenate biosynthesis</keyword>
<keyword id="KW-1185">Reference proteome</keyword>
<keyword id="KW-0808">Transferase</keyword>
<comment type="function">
    <text evidence="1">Catalyzes the reversible reaction in which hydroxymethyl group from 5,10-methylenetetrahydrofolate is transferred onto alpha-ketoisovalerate to form ketopantoate.</text>
</comment>
<comment type="catalytic activity">
    <reaction evidence="1">
        <text>3-methyl-2-oxobutanoate + (6R)-5,10-methylene-5,6,7,8-tetrahydrofolate + H2O = 2-dehydropantoate + (6S)-5,6,7,8-tetrahydrofolate</text>
        <dbReference type="Rhea" id="RHEA:11824"/>
        <dbReference type="ChEBI" id="CHEBI:11561"/>
        <dbReference type="ChEBI" id="CHEBI:11851"/>
        <dbReference type="ChEBI" id="CHEBI:15377"/>
        <dbReference type="ChEBI" id="CHEBI:15636"/>
        <dbReference type="ChEBI" id="CHEBI:57453"/>
        <dbReference type="EC" id="2.1.2.11"/>
    </reaction>
</comment>
<comment type="cofactor">
    <cofactor evidence="1">
        <name>Mg(2+)</name>
        <dbReference type="ChEBI" id="CHEBI:18420"/>
    </cofactor>
    <text evidence="1">Binds 1 Mg(2+) ion per subunit.</text>
</comment>
<comment type="pathway">
    <text evidence="1">Cofactor biosynthesis; (R)-pantothenate biosynthesis; (R)-pantoate from 3-methyl-2-oxobutanoate: step 1/2.</text>
</comment>
<comment type="subunit">
    <text evidence="1">Homodecamer; pentamer of dimers.</text>
</comment>
<comment type="subcellular location">
    <subcellularLocation>
        <location evidence="1">Cytoplasm</location>
    </subcellularLocation>
</comment>
<comment type="similarity">
    <text evidence="1">Belongs to the PanB family.</text>
</comment>
<comment type="sequence caution" evidence="2">
    <conflict type="erroneous initiation">
        <sequence resource="EMBL-CDS" id="CAI36836"/>
    </conflict>
</comment>
<sequence length="283" mass="29338">MTATSGTSSSTPTGYLVPTKKVRIADLKARKGTGEPFAMLTAYDYSTAVAFAEAGVEIMLVGDSAANVVFGYDATQRISMDEMVYLTAAVVRGAGNAAVVADLPFGTYEASDEQAVKAASEMLHRTGAHAVKIEGGVRIADRIRAITDAGISVCAHIGFTPQSVNQLGGFKVQGRGAGAEQLLADARAVQEAGADMVVLEMVPADVAASVTKELDIPTIGIGAGPDCDGQVLVWHDMAAFPAGGHRPRFAKQWASVGSDLTAAAAAYKREVAEGGFPTQEHCF</sequence>
<protein>
    <recommendedName>
        <fullName evidence="1">3-methyl-2-oxobutanoate hydroxymethyltransferase</fullName>
        <ecNumber evidence="1">2.1.2.11</ecNumber>
    </recommendedName>
    <alternativeName>
        <fullName evidence="1">Ketopantoate hydroxymethyltransferase</fullName>
        <shortName evidence="1">KPHMT</shortName>
    </alternativeName>
</protein>
<name>PANB_CORJK</name>